<keyword id="KW-0025">Alternative splicing</keyword>
<keyword id="KW-0408">Iron</keyword>
<keyword id="KW-0411">Iron-sulfur</keyword>
<keyword id="KW-0479">Metal-binding</keyword>
<keyword id="KW-1185">Reference proteome</keyword>
<name>DPH2_CAEEL</name>
<comment type="function">
    <text evidence="1">Required for the first step of diphthamide biosynthesis, a post-translational modification of histidine which occurs in elongation factor 2 (By similarity). Dph-1 and dph-2 transfer a 3-amino-3-carboxypropyl (ACP) group from S-adenosyl-L-methionine (SAM) to a histidine residue, the reaction is assisted by a reduction system comprising dph-3 and a NADH-dependent reductase (By similarity). Facilitates the reduction of the catalytic iron-sulfur cluster found in the dph-1 subunit (By similarity).</text>
</comment>
<comment type="cofactor">
    <cofactor evidence="1">
        <name>[4Fe-4S] cluster</name>
        <dbReference type="ChEBI" id="CHEBI:49883"/>
    </cofactor>
    <text evidence="1">Binds 1 [4Fe-4S] cluster per subunit. The cluster facilitates the reduction of the catalytic iron-sulfur cluster in the dph-1 subunit.</text>
</comment>
<comment type="pathway">
    <text evidence="3">Protein modification; peptidyl-diphthamide biosynthesis.</text>
</comment>
<comment type="subunit">
    <text evidence="1">Component of the 2-(3-amino-3-carboxypropyl)histidine synthase complex composed of dph-1, dph-2, dph-3 and a NADH-dependent reductase.</text>
</comment>
<comment type="alternative products">
    <event type="alternative splicing"/>
    <isoform>
        <id>Q09454-1</id>
        <name>a</name>
        <sequence type="displayed"/>
    </isoform>
    <isoform>
        <id>Q09454-2</id>
        <name>b</name>
        <sequence type="described" ref="VSP_044038"/>
    </isoform>
</comment>
<comment type="similarity">
    <text evidence="3">Belongs to the DPH1/DPH2 family. DPH2 subfamily.</text>
</comment>
<dbReference type="EMBL" id="Z46791">
    <property type="protein sequence ID" value="CAA86761.1"/>
    <property type="molecule type" value="Genomic_DNA"/>
</dbReference>
<dbReference type="EMBL" id="Z46791">
    <property type="protein sequence ID" value="CCA65532.1"/>
    <property type="molecule type" value="Genomic_DNA"/>
</dbReference>
<dbReference type="PIR" id="T19146">
    <property type="entry name" value="T19146"/>
</dbReference>
<dbReference type="RefSeq" id="NP_001254257.1">
    <molecule id="Q09454-1"/>
    <property type="nucleotide sequence ID" value="NM_001267328.3"/>
</dbReference>
<dbReference type="RefSeq" id="NP_001254258.1">
    <molecule id="Q09454-2"/>
    <property type="nucleotide sequence ID" value="NM_001267329.3"/>
</dbReference>
<dbReference type="SMR" id="Q09454"/>
<dbReference type="BioGRID" id="39963">
    <property type="interactions" value="8"/>
</dbReference>
<dbReference type="FunCoup" id="Q09454">
    <property type="interactions" value="2595"/>
</dbReference>
<dbReference type="IntAct" id="Q09454">
    <property type="interactions" value="1"/>
</dbReference>
<dbReference type="STRING" id="6239.C09G5.2a.1"/>
<dbReference type="PaxDb" id="6239-C09G5.2a"/>
<dbReference type="PeptideAtlas" id="Q09454"/>
<dbReference type="EnsemblMetazoa" id="C09G5.2a.1">
    <molecule id="Q09454-1"/>
    <property type="protein sequence ID" value="C09G5.2a.1"/>
    <property type="gene ID" value="WBGene00007488"/>
</dbReference>
<dbReference type="EnsemblMetazoa" id="C09G5.2b.1">
    <molecule id="Q09454-2"/>
    <property type="protein sequence ID" value="C09G5.2b.1"/>
    <property type="gene ID" value="WBGene00007488"/>
</dbReference>
<dbReference type="GeneID" id="174649"/>
<dbReference type="KEGG" id="cel:CELE_C09G5.2"/>
<dbReference type="UCSC" id="C09G5.2">
    <molecule id="Q09454-1"/>
    <property type="organism name" value="c. elegans"/>
</dbReference>
<dbReference type="AGR" id="WB:WBGene00007488"/>
<dbReference type="CTD" id="174649"/>
<dbReference type="WormBase" id="C09G5.2a">
    <molecule id="Q09454-1"/>
    <property type="protein sequence ID" value="CE15608"/>
    <property type="gene ID" value="WBGene00007488"/>
    <property type="gene designation" value="dph-2"/>
</dbReference>
<dbReference type="WormBase" id="C09G5.2b">
    <molecule id="Q09454-2"/>
    <property type="protein sequence ID" value="CE45960"/>
    <property type="gene ID" value="WBGene00007488"/>
    <property type="gene designation" value="dph-2"/>
</dbReference>
<dbReference type="eggNOG" id="KOG2648">
    <property type="taxonomic scope" value="Eukaryota"/>
</dbReference>
<dbReference type="GeneTree" id="ENSGT00940000153694"/>
<dbReference type="HOGENOM" id="CLU_015210_1_0_1"/>
<dbReference type="InParanoid" id="Q09454"/>
<dbReference type="OMA" id="TSNSRPM"/>
<dbReference type="OrthoDB" id="449241at2759"/>
<dbReference type="PhylomeDB" id="Q09454"/>
<dbReference type="Reactome" id="R-CEL-5358493">
    <property type="pathway name" value="Synthesis of diphthamide-EEF2"/>
</dbReference>
<dbReference type="UniPathway" id="UPA00559"/>
<dbReference type="PRO" id="PR:Q09454"/>
<dbReference type="Proteomes" id="UP000001940">
    <property type="component" value="Chromosome II"/>
</dbReference>
<dbReference type="Bgee" id="WBGene00007488">
    <property type="expression patterns" value="Expressed in germ line (C elegans) and 4 other cell types or tissues"/>
</dbReference>
<dbReference type="GO" id="GO:0120513">
    <property type="term" value="C:2-(3-amino-3-carboxypropyl)histidine synthase complex"/>
    <property type="evidence" value="ECO:0000250"/>
    <property type="project" value="UniProtKB"/>
</dbReference>
<dbReference type="GO" id="GO:0090560">
    <property type="term" value="F:2-(3-amino-3-carboxypropyl)histidine synthase activity"/>
    <property type="evidence" value="ECO:0007669"/>
    <property type="project" value="UniProtKB-EC"/>
</dbReference>
<dbReference type="GO" id="GO:0051539">
    <property type="term" value="F:4 iron, 4 sulfur cluster binding"/>
    <property type="evidence" value="ECO:0000250"/>
    <property type="project" value="UniProtKB"/>
</dbReference>
<dbReference type="GO" id="GO:0046872">
    <property type="term" value="F:metal ion binding"/>
    <property type="evidence" value="ECO:0007669"/>
    <property type="project" value="UniProtKB-KW"/>
</dbReference>
<dbReference type="GO" id="GO:0017183">
    <property type="term" value="P:protein histidyl modification to diphthamide"/>
    <property type="evidence" value="ECO:0000250"/>
    <property type="project" value="UniProtKB"/>
</dbReference>
<dbReference type="FunFam" id="3.40.50.11840:FF:000011">
    <property type="entry name" value="2-(3-amino-3-carboxypropyl)histidine synthase subunit 2"/>
    <property type="match status" value="1"/>
</dbReference>
<dbReference type="FunFam" id="3.40.50.11860:FF:000001">
    <property type="entry name" value="2-(3-amino-3-carboxypropyl)histidine synthase subunit 2"/>
    <property type="match status" value="1"/>
</dbReference>
<dbReference type="Gene3D" id="3.40.50.11840">
    <property type="entry name" value="Diphthamide synthesis DPH1/DPH2 domain 1"/>
    <property type="match status" value="1"/>
</dbReference>
<dbReference type="Gene3D" id="3.40.50.11860">
    <property type="entry name" value="Diphthamide synthesis DPH1/DPH2 domain 3"/>
    <property type="match status" value="1"/>
</dbReference>
<dbReference type="InterPro" id="IPR010014">
    <property type="entry name" value="DHP2"/>
</dbReference>
<dbReference type="InterPro" id="IPR016435">
    <property type="entry name" value="DPH1/DPH2"/>
</dbReference>
<dbReference type="InterPro" id="IPR042263">
    <property type="entry name" value="DPH1/DPH2_1"/>
</dbReference>
<dbReference type="InterPro" id="IPR042265">
    <property type="entry name" value="DPH1/DPH2_3"/>
</dbReference>
<dbReference type="NCBIfam" id="TIGR00322">
    <property type="entry name" value="diphth2_R"/>
    <property type="match status" value="1"/>
</dbReference>
<dbReference type="NCBIfam" id="TIGR00272">
    <property type="entry name" value="DPH2"/>
    <property type="match status" value="1"/>
</dbReference>
<dbReference type="PANTHER" id="PTHR10762:SF2">
    <property type="entry name" value="2-(3-AMINO-3-CARBOXYPROPYL)HISTIDINE SYNTHASE SUBUNIT 2"/>
    <property type="match status" value="1"/>
</dbReference>
<dbReference type="PANTHER" id="PTHR10762">
    <property type="entry name" value="DIPHTHAMIDE BIOSYNTHESIS PROTEIN"/>
    <property type="match status" value="1"/>
</dbReference>
<dbReference type="Pfam" id="PF01866">
    <property type="entry name" value="Diphthamide_syn"/>
    <property type="match status" value="1"/>
</dbReference>
<dbReference type="SFLD" id="SFLDG01121">
    <property type="entry name" value="Diphthamide_biosynthesis"/>
    <property type="match status" value="1"/>
</dbReference>
<dbReference type="SFLD" id="SFLDS00032">
    <property type="entry name" value="Radical_SAM_3-amino-3-carboxyp"/>
    <property type="match status" value="1"/>
</dbReference>
<feature type="chain" id="PRO_0000083395" description="2-(3-amino-3-carboxypropyl)histidine synthase subunit 2">
    <location>
        <begin position="1"/>
        <end position="476"/>
    </location>
</feature>
<feature type="region of interest" description="Disordered" evidence="2">
    <location>
        <begin position="1"/>
        <end position="24"/>
    </location>
</feature>
<feature type="region of interest" description="Disordered" evidence="2">
    <location>
        <begin position="451"/>
        <end position="476"/>
    </location>
</feature>
<feature type="compositionally biased region" description="Polar residues" evidence="2">
    <location>
        <begin position="1"/>
        <end position="15"/>
    </location>
</feature>
<feature type="binding site" evidence="1">
    <location>
        <position position="102"/>
    </location>
    <ligand>
        <name>[4Fe-4S] cluster</name>
        <dbReference type="ChEBI" id="CHEBI:49883"/>
    </ligand>
</feature>
<feature type="binding site" evidence="1">
    <location>
        <position position="123"/>
    </location>
    <ligand>
        <name>[4Fe-4S] cluster</name>
        <dbReference type="ChEBI" id="CHEBI:49883"/>
    </ligand>
</feature>
<feature type="binding site" evidence="1">
    <location>
        <position position="347"/>
    </location>
    <ligand>
        <name>[4Fe-4S] cluster</name>
        <dbReference type="ChEBI" id="CHEBI:49883"/>
    </ligand>
</feature>
<feature type="splice variant" id="VSP_044038" description="In isoform b." evidence="3">
    <location>
        <begin position="1"/>
        <end position="307"/>
    </location>
</feature>
<accession>Q09454</accession>
<accession>F5GU80</accession>
<protein>
    <recommendedName>
        <fullName evidence="3">2-(3-amino-3-carboxypropyl)histidine synthase subunit 2</fullName>
    </recommendedName>
    <alternativeName>
        <fullName>Diphthamide biosynthesis protein 2</fullName>
    </alternativeName>
    <alternativeName>
        <fullName evidence="3">Diphtheria toxin resistance protein 2</fullName>
    </alternativeName>
    <alternativeName>
        <fullName evidence="3">S-adenosyl-L-methionine:L-histidine 3-amino-3-carboxypropyltransferase 2</fullName>
    </alternativeName>
</protein>
<gene>
    <name type="primary">dph-2</name>
    <name type="ORF">C09G5.2</name>
</gene>
<proteinExistence type="inferred from homology"/>
<reference key="1">
    <citation type="journal article" date="1998" name="Science">
        <title>Genome sequence of the nematode C. elegans: a platform for investigating biology.</title>
        <authorList>
            <consortium name="The C. elegans sequencing consortium"/>
        </authorList>
    </citation>
    <scope>NUCLEOTIDE SEQUENCE [LARGE SCALE GENOMIC DNA]</scope>
    <scope>ALTERNATIVE SPLICING</scope>
    <source>
        <strain>Bristol N2</strain>
    </source>
</reference>
<evidence type="ECO:0000250" key="1">
    <source>
        <dbReference type="UniProtKB" id="P32461"/>
    </source>
</evidence>
<evidence type="ECO:0000256" key="2">
    <source>
        <dbReference type="SAM" id="MobiDB-lite"/>
    </source>
</evidence>
<evidence type="ECO:0000305" key="3"/>
<sequence length="476" mass="52955">MTESAPSAFFTTSTPADHVHEEESSNTGYFENLPENDIHSFFEIDATSEWIKQGNHQRIALQFPDSLLPYSEKVTKLIESRFRSESAKKTFVLADTSYRSCCVDEVAAAHADCTALVHFGEACHSAPTDKIDVKYVLGSMPIFIDQFRMEFQNVADQLTAEHIVLLMDSCFSHEQEKVAAVIKEVLPGNRHVECSLLPSEDVLKQNRQNIYLGREIPSCLRNNQPTDLIFCGFPNSPLLPIWLLSYPSCSTVSHFNPINKTIQHESTRSSRLLRKRLFLVEKLKDADTVGLVVGSVGVDKHREAVKRMREMCKKAGKKIYVISVGKINVPKLSNFSTDIDVFVLLSCPFGVVLDSSDYFRPVVSYFEAEIALNPAKTWAADFGWSAEFAAFLEDKIETEVPDDKAAGDFSLISGKVRVQKTEEEKNGDGPSSVAIYNPGYCNDRTWKGLNDGVSTAEDSTKMGEGRSGIAQGYSGK</sequence>
<organism>
    <name type="scientific">Caenorhabditis elegans</name>
    <dbReference type="NCBI Taxonomy" id="6239"/>
    <lineage>
        <taxon>Eukaryota</taxon>
        <taxon>Metazoa</taxon>
        <taxon>Ecdysozoa</taxon>
        <taxon>Nematoda</taxon>
        <taxon>Chromadorea</taxon>
        <taxon>Rhabditida</taxon>
        <taxon>Rhabditina</taxon>
        <taxon>Rhabditomorpha</taxon>
        <taxon>Rhabditoidea</taxon>
        <taxon>Rhabditidae</taxon>
        <taxon>Peloderinae</taxon>
        <taxon>Caenorhabditis</taxon>
    </lineage>
</organism>